<comment type="similarity">
    <text evidence="1">Belongs to the bacterial ribosomal protein bL34 family.</text>
</comment>
<proteinExistence type="inferred from homology"/>
<reference key="1">
    <citation type="submission" date="2006-11" db="EMBL/GenBank/DDBJ databases">
        <title>Identification and characterization of a new conjugation/ type IVA secretion system (trb/tra) of L. pneumophila Corby localized on a mobile genomic island.</title>
        <authorList>
            <person name="Gloeckner G."/>
            <person name="Albert-Weissenberger C."/>
            <person name="Weinmann E."/>
            <person name="Jacobi S."/>
            <person name="Schunder E."/>
            <person name="Steinert M."/>
            <person name="Buchrieser C."/>
            <person name="Hacker J."/>
            <person name="Heuner K."/>
        </authorList>
    </citation>
    <scope>NUCLEOTIDE SEQUENCE [LARGE SCALE GENOMIC DNA]</scope>
    <source>
        <strain>Corby</strain>
    </source>
</reference>
<keyword id="KW-0687">Ribonucleoprotein</keyword>
<keyword id="KW-0689">Ribosomal protein</keyword>
<organism>
    <name type="scientific">Legionella pneumophila (strain Corby)</name>
    <dbReference type="NCBI Taxonomy" id="400673"/>
    <lineage>
        <taxon>Bacteria</taxon>
        <taxon>Pseudomonadati</taxon>
        <taxon>Pseudomonadota</taxon>
        <taxon>Gammaproteobacteria</taxon>
        <taxon>Legionellales</taxon>
        <taxon>Legionellaceae</taxon>
        <taxon>Legionella</taxon>
    </lineage>
</organism>
<protein>
    <recommendedName>
        <fullName evidence="1">Large ribosomal subunit protein bL34</fullName>
    </recommendedName>
    <alternativeName>
        <fullName evidence="2">50S ribosomal protein L34</fullName>
    </alternativeName>
</protein>
<evidence type="ECO:0000255" key="1">
    <source>
        <dbReference type="HAMAP-Rule" id="MF_00391"/>
    </source>
</evidence>
<evidence type="ECO:0000305" key="2"/>
<dbReference type="EMBL" id="CP000675">
    <property type="protein sequence ID" value="ABQ57206.1"/>
    <property type="molecule type" value="Genomic_DNA"/>
</dbReference>
<dbReference type="RefSeq" id="WP_010948689.1">
    <property type="nucleotide sequence ID" value="NZ_JAPMSS010000003.1"/>
</dbReference>
<dbReference type="SMR" id="A5IIK6"/>
<dbReference type="GeneID" id="57037010"/>
<dbReference type="KEGG" id="lpc:LPC_3320"/>
<dbReference type="HOGENOM" id="CLU_129938_2_0_6"/>
<dbReference type="GO" id="GO:1990904">
    <property type="term" value="C:ribonucleoprotein complex"/>
    <property type="evidence" value="ECO:0007669"/>
    <property type="project" value="UniProtKB-KW"/>
</dbReference>
<dbReference type="GO" id="GO:0005840">
    <property type="term" value="C:ribosome"/>
    <property type="evidence" value="ECO:0007669"/>
    <property type="project" value="UniProtKB-KW"/>
</dbReference>
<dbReference type="GO" id="GO:0003735">
    <property type="term" value="F:structural constituent of ribosome"/>
    <property type="evidence" value="ECO:0007669"/>
    <property type="project" value="InterPro"/>
</dbReference>
<dbReference type="GO" id="GO:0006412">
    <property type="term" value="P:translation"/>
    <property type="evidence" value="ECO:0007669"/>
    <property type="project" value="UniProtKB-UniRule"/>
</dbReference>
<dbReference type="FunFam" id="1.10.287.3980:FF:000001">
    <property type="entry name" value="Mitochondrial ribosomal protein L34"/>
    <property type="match status" value="1"/>
</dbReference>
<dbReference type="Gene3D" id="1.10.287.3980">
    <property type="match status" value="1"/>
</dbReference>
<dbReference type="HAMAP" id="MF_00391">
    <property type="entry name" value="Ribosomal_bL34"/>
    <property type="match status" value="1"/>
</dbReference>
<dbReference type="InterPro" id="IPR000271">
    <property type="entry name" value="Ribosomal_bL34"/>
</dbReference>
<dbReference type="InterPro" id="IPR020939">
    <property type="entry name" value="Ribosomal_bL34_CS"/>
</dbReference>
<dbReference type="NCBIfam" id="TIGR01030">
    <property type="entry name" value="rpmH_bact"/>
    <property type="match status" value="1"/>
</dbReference>
<dbReference type="PANTHER" id="PTHR14503:SF4">
    <property type="entry name" value="LARGE RIBOSOMAL SUBUNIT PROTEIN BL34M"/>
    <property type="match status" value="1"/>
</dbReference>
<dbReference type="PANTHER" id="PTHR14503">
    <property type="entry name" value="MITOCHONDRIAL RIBOSOMAL PROTEIN 34 FAMILY MEMBER"/>
    <property type="match status" value="1"/>
</dbReference>
<dbReference type="Pfam" id="PF00468">
    <property type="entry name" value="Ribosomal_L34"/>
    <property type="match status" value="1"/>
</dbReference>
<dbReference type="PROSITE" id="PS00784">
    <property type="entry name" value="RIBOSOMAL_L34"/>
    <property type="match status" value="1"/>
</dbReference>
<feature type="chain" id="PRO_1000013364" description="Large ribosomal subunit protein bL34">
    <location>
        <begin position="1"/>
        <end position="44"/>
    </location>
</feature>
<sequence length="44" mass="5322">MKRTFQPSNLKRKRDHGFRLRMSTRAGRLVIKRRRAKGRKRLSA</sequence>
<name>RL34_LEGPC</name>
<accession>A5IIK6</accession>
<gene>
    <name evidence="1" type="primary">rpmH</name>
    <name type="ordered locus">LPC_3320</name>
</gene>